<sequence length="24" mass="2327">AVITGACERDVQCGGGTCCAVSLI</sequence>
<reference key="1">
    <citation type="journal article" date="2005" name="Peptides">
        <title>Isolation and structural characterization of novel Rugosin A-like insulinotropic peptide from the skin secretions of Rana saharica frog.</title>
        <authorList>
            <person name="Marenah L."/>
            <person name="Flatt P.R."/>
            <person name="Orr D.F."/>
            <person name="Shaw C."/>
            <person name="Abdel-Wahab Y.H.A."/>
        </authorList>
    </citation>
    <scope>PROTEIN SEQUENCE</scope>
    <scope>FUNCTION</scope>
    <scope>SUBCELLULAR LOCATION</scope>
    <scope>TISSUE SPECIFICITY</scope>
    <scope>MASS SPECTROMETRY</scope>
    <source>
        <tissue>Skin secretion</tissue>
    </source>
</reference>
<feature type="chain" id="PRO_0000248508" description="Prokineticin 1-like protein">
    <location>
        <begin position="1"/>
        <end position="24" status="greater than"/>
    </location>
</feature>
<feature type="disulfide bond" evidence="1">
    <location>
        <begin position="7"/>
        <end position="19"/>
    </location>
</feature>
<feature type="disulfide bond" evidence="1">
    <location>
        <begin position="13"/>
        <end status="unknown"/>
    </location>
</feature>
<feature type="disulfide bond" evidence="1">
    <location>
        <begin position="18"/>
        <end status="unknown"/>
    </location>
</feature>
<feature type="non-terminal residue" evidence="3">
    <location>
        <position position="24"/>
    </location>
</feature>
<evidence type="ECO:0000250" key="1">
    <source>
        <dbReference type="UniProtKB" id="P25687"/>
    </source>
</evidence>
<evidence type="ECO:0000269" key="2">
    <source>
    </source>
</evidence>
<evidence type="ECO:0000303" key="3">
    <source>
    </source>
</evidence>
<evidence type="ECO:0000305" key="4"/>
<organism>
    <name type="scientific">Pelophylax saharicus</name>
    <name type="common">Sahara frog</name>
    <name type="synonym">Rana saharica</name>
    <dbReference type="NCBI Taxonomy" id="70019"/>
    <lineage>
        <taxon>Eukaryota</taxon>
        <taxon>Metazoa</taxon>
        <taxon>Chordata</taxon>
        <taxon>Craniata</taxon>
        <taxon>Vertebrata</taxon>
        <taxon>Euteleostomi</taxon>
        <taxon>Amphibia</taxon>
        <taxon>Batrachia</taxon>
        <taxon>Anura</taxon>
        <taxon>Neobatrachia</taxon>
        <taxon>Ranoidea</taxon>
        <taxon>Ranidae</taxon>
        <taxon>Pelophylax</taxon>
    </lineage>
</organism>
<dbReference type="GO" id="GO:0005576">
    <property type="term" value="C:extracellular region"/>
    <property type="evidence" value="ECO:0000314"/>
    <property type="project" value="UniProtKB"/>
</dbReference>
<dbReference type="GO" id="GO:0006952">
    <property type="term" value="P:defense response"/>
    <property type="evidence" value="ECO:0007669"/>
    <property type="project" value="UniProtKB-KW"/>
</dbReference>
<dbReference type="GO" id="GO:0032024">
    <property type="term" value="P:positive regulation of insulin secretion"/>
    <property type="evidence" value="ECO:0000314"/>
    <property type="project" value="UniProtKB"/>
</dbReference>
<dbReference type="Gene3D" id="2.10.80.10">
    <property type="entry name" value="Lipase, subunit A"/>
    <property type="match status" value="1"/>
</dbReference>
<dbReference type="InterPro" id="IPR023569">
    <property type="entry name" value="Prokineticin_domain"/>
</dbReference>
<dbReference type="Pfam" id="PF06607">
    <property type="entry name" value="Prokineticin"/>
    <property type="match status" value="1"/>
</dbReference>
<dbReference type="SUPFAM" id="SSF57190">
    <property type="entry name" value="Colipase-like"/>
    <property type="match status" value="1"/>
</dbReference>
<keyword id="KW-0878">Amphibian defense peptide</keyword>
<keyword id="KW-0903">Direct protein sequencing</keyword>
<keyword id="KW-1015">Disulfide bond</keyword>
<keyword id="KW-0964">Secreted</keyword>
<name>PROK1_PELSA</name>
<accession>P84909</accession>
<proteinExistence type="evidence at protein level"/>
<protein>
    <recommendedName>
        <fullName>Prokineticin 1-like protein</fullName>
    </recommendedName>
</protein>
<comment type="function">
    <text evidence="2">Stimulates insulin secretion by BRIN-BD11 cells in vitro.</text>
</comment>
<comment type="subcellular location">
    <subcellularLocation>
        <location evidence="2">Secreted</location>
    </subcellularLocation>
</comment>
<comment type="tissue specificity">
    <text evidence="2">Expressed by the skin glands.</text>
</comment>
<comment type="mass spectrometry" mass="2930.8" method="Electrospray" evidence="2"/>
<comment type="similarity">
    <text evidence="4">Belongs to the AVIT (prokineticin) family.</text>
</comment>